<accession>Q9YGA6</accession>
<accession>Q9V306</accession>
<accession>S5ZTR0</accession>
<sequence>MAGVRLVDVWKVFGEVTAVREMSLEVKDGEFMILLGPSGCGKTTTLRMIAGLEEPSRGQIYIGDKLVADPEKGIFVPPKDRDIAMVFQSYALYPHMTVYDNIAFPLKLRKVPRQEIDQRVREVAELLGLTELLNRKPRELSGGQRQRVALGRAIVRKPQVFLMDEPLSNLDAKLRVRMRAELKKLQRQLGVTTIYVTHDQVEAMTMGDRIAVMNRGVLQQVGSPDEVYDKPANTFVAGFIGSPPMNFLDAIVTEDGFVDFGEFRLKLLPDQFEVLGELGYVGREVIFGIRPEDLYDAMFAQVRVPGENLVRAVVEIVENLGSERIVHLRVGGVTFVGSFRSESRVREGVEVDVVFDMKKIHIFDKTTGKAIF</sequence>
<evidence type="ECO:0000255" key="1">
    <source>
        <dbReference type="PROSITE-ProRule" id="PRU00434"/>
    </source>
</evidence>
<evidence type="ECO:0000269" key="2">
    <source>
    </source>
</evidence>
<evidence type="ECO:0000269" key="3">
    <source>
    </source>
</evidence>
<evidence type="ECO:0000269" key="4">
    <source>
    </source>
</evidence>
<evidence type="ECO:0000269" key="5">
    <source>
    </source>
</evidence>
<evidence type="ECO:0000269" key="6">
    <source>
    </source>
</evidence>
<evidence type="ECO:0000305" key="7"/>
<evidence type="ECO:0007829" key="8">
    <source>
        <dbReference type="PDB" id="1G29"/>
    </source>
</evidence>
<comment type="function">
    <text evidence="2 4 6">Part of the ABC transporter complex MalEFGK involved in trehalose/maltose import. Responsible for energy coupling to the transport system.</text>
</comment>
<comment type="catalytic activity">
    <reaction>
        <text>D-maltose(out) + ATP + H2O = D-maltose(in) + ADP + phosphate + H(+)</text>
        <dbReference type="Rhea" id="RHEA:22132"/>
        <dbReference type="ChEBI" id="CHEBI:15377"/>
        <dbReference type="ChEBI" id="CHEBI:15378"/>
        <dbReference type="ChEBI" id="CHEBI:17306"/>
        <dbReference type="ChEBI" id="CHEBI:30616"/>
        <dbReference type="ChEBI" id="CHEBI:43474"/>
        <dbReference type="ChEBI" id="CHEBI:456216"/>
        <dbReference type="EC" id="7.5.2.1"/>
    </reaction>
</comment>
<comment type="activity regulation">
    <text evidence="2">Inhibited by N-ethylmaleimide but not by vanadate.</text>
</comment>
<comment type="biophysicochemical properties">
    <kinetics>
        <KM evidence="2">155 uM for ATP</KM>
        <KM evidence="2">430 uM for GTP</KM>
        <KM evidence="2">870 uM for CTP</KM>
        <Vmax evidence="2">0.55 umol/min/mg enzyme with ATP as substrate</Vmax>
        <Vmax evidence="2">0.45 umol/min/mg enzyme with GTP as substrate</Vmax>
        <Vmax evidence="2">0.32 umol/min/mg enzyme with CTP as substrate</Vmax>
    </kinetics>
    <phDependence>
        <text evidence="2">Optimum pH is 7.0.</text>
    </phDependence>
    <temperatureDependence>
        <text evidence="2">Optimum temperature is 80 degrees Celsius.</text>
    </temperatureDependence>
</comment>
<comment type="subunit">
    <text evidence="3 4 5">Homodimer. The complex is composed of two ATP-binding proteins (MalK), two transmembrane proteins (MalG and MalF) and a solute-binding protein (MalE).</text>
</comment>
<comment type="subcellular location">
    <subcellularLocation>
        <location evidence="4">Cell membrane</location>
        <topology evidence="4">Peripheral membrane protein</topology>
    </subcellularLocation>
</comment>
<comment type="induction">
    <text evidence="2">Induced by maltose and trehalose.</text>
</comment>
<comment type="domain">
    <text evidence="3">Contains an N-terminal ATPase domain and a C-terminal regulatory domain.</text>
</comment>
<comment type="similarity">
    <text evidence="7">Belongs to the ABC transporter superfamily. Maltose/trehalose importer (TC 3.A.1.1.7) family.</text>
</comment>
<dbReference type="EC" id="7.5.2.1"/>
<dbReference type="EMBL" id="AF121946">
    <property type="protein sequence ID" value="AAD23570.1"/>
    <property type="molecule type" value="Genomic_DNA"/>
</dbReference>
<dbReference type="EMBL" id="AF126010">
    <property type="protein sequence ID" value="AAD24578.1"/>
    <property type="molecule type" value="Genomic_DNA"/>
</dbReference>
<dbReference type="EMBL" id="AF307053">
    <property type="protein sequence ID" value="AAG45393.1"/>
    <property type="molecule type" value="Genomic_DNA"/>
</dbReference>
<dbReference type="EMBL" id="AB054186">
    <property type="protein sequence ID" value="BAC10984.1"/>
    <property type="molecule type" value="Genomic_DNA"/>
</dbReference>
<dbReference type="EMBL" id="CP006670">
    <property type="protein sequence ID" value="AGT34279.1"/>
    <property type="molecule type" value="Genomic_DNA"/>
</dbReference>
<dbReference type="RefSeq" id="WP_020953704.1">
    <property type="nucleotide sequence ID" value="NC_022084.1"/>
</dbReference>
<dbReference type="PDB" id="1G29">
    <property type="method" value="X-ray"/>
    <property type="resolution" value="1.90 A"/>
    <property type="chains" value="1/2=1-372"/>
</dbReference>
<dbReference type="PDBsum" id="1G29"/>
<dbReference type="SMR" id="Q9YGA6"/>
<dbReference type="STRING" id="523849.OCC_13985"/>
<dbReference type="PaxDb" id="523849-OCC_13985"/>
<dbReference type="GeneID" id="16549639"/>
<dbReference type="KEGG" id="tlt:OCC_13985"/>
<dbReference type="HOGENOM" id="CLU_000604_1_1_2"/>
<dbReference type="OrthoDB" id="18368at2157"/>
<dbReference type="SABIO-RK" id="Q9YGA6"/>
<dbReference type="EvolutionaryTrace" id="Q9YGA6"/>
<dbReference type="Proteomes" id="UP000015502">
    <property type="component" value="Chromosome"/>
</dbReference>
<dbReference type="GO" id="GO:0055052">
    <property type="term" value="C:ATP-binding cassette (ABC) transporter complex, substrate-binding subunit-containing"/>
    <property type="evidence" value="ECO:0007669"/>
    <property type="project" value="TreeGrafter"/>
</dbReference>
<dbReference type="GO" id="GO:0015423">
    <property type="term" value="F:ABC-type maltose transporter activity"/>
    <property type="evidence" value="ECO:0007669"/>
    <property type="project" value="UniProtKB-EC"/>
</dbReference>
<dbReference type="GO" id="GO:0005524">
    <property type="term" value="F:ATP binding"/>
    <property type="evidence" value="ECO:0007669"/>
    <property type="project" value="UniProtKB-KW"/>
</dbReference>
<dbReference type="GO" id="GO:0016887">
    <property type="term" value="F:ATP hydrolysis activity"/>
    <property type="evidence" value="ECO:0007669"/>
    <property type="project" value="InterPro"/>
</dbReference>
<dbReference type="GO" id="GO:0046872">
    <property type="term" value="F:metal ion binding"/>
    <property type="evidence" value="ECO:0007669"/>
    <property type="project" value="UniProtKB-KW"/>
</dbReference>
<dbReference type="CDD" id="cd03301">
    <property type="entry name" value="ABC_MalK_N"/>
    <property type="match status" value="1"/>
</dbReference>
<dbReference type="FunFam" id="3.40.50.300:FF:000042">
    <property type="entry name" value="Maltose/maltodextrin ABC transporter, ATP-binding protein"/>
    <property type="match status" value="1"/>
</dbReference>
<dbReference type="Gene3D" id="2.40.50.100">
    <property type="match status" value="1"/>
</dbReference>
<dbReference type="Gene3D" id="2.40.50.140">
    <property type="entry name" value="Nucleic acid-binding proteins"/>
    <property type="match status" value="1"/>
</dbReference>
<dbReference type="Gene3D" id="3.40.50.300">
    <property type="entry name" value="P-loop containing nucleotide triphosphate hydrolases"/>
    <property type="match status" value="1"/>
</dbReference>
<dbReference type="InterPro" id="IPR003593">
    <property type="entry name" value="AAA+_ATPase"/>
</dbReference>
<dbReference type="InterPro" id="IPR003439">
    <property type="entry name" value="ABC_transporter-like_ATP-bd"/>
</dbReference>
<dbReference type="InterPro" id="IPR017871">
    <property type="entry name" value="ABC_transporter-like_CS"/>
</dbReference>
<dbReference type="InterPro" id="IPR015855">
    <property type="entry name" value="ABC_transpr_MalK-like"/>
</dbReference>
<dbReference type="InterPro" id="IPR047641">
    <property type="entry name" value="ABC_transpr_MalK/UgpC-like"/>
</dbReference>
<dbReference type="InterPro" id="IPR008995">
    <property type="entry name" value="Mo/tungstate-bd_C_term_dom"/>
</dbReference>
<dbReference type="InterPro" id="IPR012340">
    <property type="entry name" value="NA-bd_OB-fold"/>
</dbReference>
<dbReference type="InterPro" id="IPR040582">
    <property type="entry name" value="OB_MalK-like"/>
</dbReference>
<dbReference type="InterPro" id="IPR027417">
    <property type="entry name" value="P-loop_NTPase"/>
</dbReference>
<dbReference type="NCBIfam" id="NF008653">
    <property type="entry name" value="PRK11650.1"/>
    <property type="match status" value="1"/>
</dbReference>
<dbReference type="PANTHER" id="PTHR43875">
    <property type="entry name" value="MALTODEXTRIN IMPORT ATP-BINDING PROTEIN MSMX"/>
    <property type="match status" value="1"/>
</dbReference>
<dbReference type="PANTHER" id="PTHR43875:SF1">
    <property type="entry name" value="OSMOPROTECTIVE COMPOUNDS UPTAKE ATP-BINDING PROTEIN GGTA"/>
    <property type="match status" value="1"/>
</dbReference>
<dbReference type="Pfam" id="PF00005">
    <property type="entry name" value="ABC_tran"/>
    <property type="match status" value="1"/>
</dbReference>
<dbReference type="Pfam" id="PF17912">
    <property type="entry name" value="OB_MalK"/>
    <property type="match status" value="1"/>
</dbReference>
<dbReference type="SMART" id="SM00382">
    <property type="entry name" value="AAA"/>
    <property type="match status" value="1"/>
</dbReference>
<dbReference type="SUPFAM" id="SSF50331">
    <property type="entry name" value="MOP-like"/>
    <property type="match status" value="1"/>
</dbReference>
<dbReference type="SUPFAM" id="SSF52540">
    <property type="entry name" value="P-loop containing nucleoside triphosphate hydrolases"/>
    <property type="match status" value="1"/>
</dbReference>
<dbReference type="PROSITE" id="PS00211">
    <property type="entry name" value="ABC_TRANSPORTER_1"/>
    <property type="match status" value="1"/>
</dbReference>
<dbReference type="PROSITE" id="PS50893">
    <property type="entry name" value="ABC_TRANSPORTER_2"/>
    <property type="match status" value="1"/>
</dbReference>
<reference key="1">
    <citation type="journal article" date="1999" name="J. Biol. Chem.">
        <title>Molecular and biochemical analysis of MalK, the ATP-hydrolyzing subunit of the trehalose/maltose transport system of the hyperthermophilic archaeon Thermococcus litoralis.</title>
        <authorList>
            <person name="Greller G."/>
            <person name="Horlacher R."/>
            <person name="DiRuggiero J."/>
            <person name="Boos W."/>
        </authorList>
    </citation>
    <scope>NUCLEOTIDE SEQUENCE [GENOMIC DNA]</scope>
    <scope>FUNCTION</scope>
    <scope>ATPASE ACTIVITY</scope>
    <scope>ACTIVITY REGULATION</scope>
    <scope>BIOPHYSICOCHEMICAL PROPERTIES</scope>
    <scope>INDUCTION</scope>
    <source>
        <strain>ATCC 51850 / DSM 5473 / JCM 8560 / NS-C</strain>
    </source>
</reference>
<reference key="2">
    <citation type="journal article" date="2000" name="Mol. Microbiol.">
        <title>Evidence of recent lateral gene transfer among hyperthermophilic archaea.</title>
        <authorList>
            <person name="Diruggiero J."/>
            <person name="Dunn D."/>
            <person name="Maeder D.L."/>
            <person name="Holley-Shanks R."/>
            <person name="Chatard J."/>
            <person name="Horlacher R."/>
            <person name="Robb F.T."/>
            <person name="Boos W."/>
            <person name="Weiss R.B."/>
        </authorList>
    </citation>
    <scope>NUCLEOTIDE SEQUENCE [GENOMIC DNA]</scope>
    <source>
        <strain>ATCC 51850 / DSM 5473 / JCM 8560 / NS-C</strain>
    </source>
</reference>
<reference key="3">
    <citation type="journal article" date="2004" name="Biochem. Biophys. Res. Commun.">
        <title>Molecular evolution of the ATPase subunit of three archaeal sugar ABC transporters.</title>
        <authorList>
            <person name="Imamura H."/>
            <person name="Jeon B.S."/>
            <person name="Wakagi T."/>
        </authorList>
    </citation>
    <scope>NUCLEOTIDE SEQUENCE [GENOMIC DNA]</scope>
    <source>
        <strain>ATCC 51850 / DSM 5473 / JCM 8560 / NS-C</strain>
    </source>
</reference>
<reference key="4">
    <citation type="journal article" date="2012" name="J. Bacteriol.">
        <title>Genome sequence of the model hyperthermophilic archaeon Thermococcus litoralis NS-C.</title>
        <authorList>
            <person name="Gardner A.F."/>
            <person name="Kumar S."/>
            <person name="Perler F.B."/>
        </authorList>
    </citation>
    <scope>NUCLEOTIDE SEQUENCE [LARGE SCALE GENOMIC DNA]</scope>
    <source>
        <strain>ATCC 51850 / DSM 5473 / JCM 8560 / NS-C</strain>
    </source>
</reference>
<reference key="5">
    <citation type="journal article" date="1996" name="J. Bacteriol.">
        <title>High-affinity maltose/trehalose transport system in the hyperthermophilic archaeon Thermococcus litoralis.</title>
        <authorList>
            <person name="Xavier K.B."/>
            <person name="Martins L.O."/>
            <person name="Peist R."/>
            <person name="Kossmann M."/>
            <person name="Boos W."/>
            <person name="Santos H."/>
        </authorList>
    </citation>
    <scope>FUNCTION</scope>
    <source>
        <strain>ATCC 51850 / DSM 5473 / JCM 8560 / NS-C</strain>
    </source>
</reference>
<reference key="6">
    <citation type="journal article" date="2001" name="Eur. J. Biochem.">
        <title>Purification and characterization of the heterologously expressed trehalose/maltose ABC transporter complex of the hyperthermophilic archaeon Thermococcus litoralis.</title>
        <authorList>
            <person name="Greller G."/>
            <person name="Riek R."/>
            <person name="Boos W."/>
        </authorList>
    </citation>
    <scope>FUNCTION</scope>
    <scope>SUBUNIT</scope>
    <scope>SUBCELLULAR LOCATION</scope>
</reference>
<reference key="7">
    <citation type="journal article" date="2002" name="Acta Crystallogr. D">
        <title>Crystallization and preliminary X-ray analysis of the trehalose/maltose ABC transporter MalFGK2 from Thermococcus litoralis.</title>
        <authorList>
            <person name="Schiefner A."/>
            <person name="Diederichs K."/>
            <person name="Hashimoto K."/>
            <person name="Boos W."/>
            <person name="Welte W."/>
        </authorList>
    </citation>
    <scope>CRYSTALLIZATION</scope>
    <scope>SUBUNIT</scope>
</reference>
<reference key="8">
    <citation type="journal article" date="2000" name="EMBO J.">
        <title>Crystal structure of MalK, the ATPase subunit of the trehalose/maltose ABC transporter of the archaeon Thermococcus litoralis.</title>
        <authorList>
            <person name="Diederichs K."/>
            <person name="Diez J."/>
            <person name="Greller G."/>
            <person name="Muller C."/>
            <person name="Breed J."/>
            <person name="Schnell C."/>
            <person name="Vonrhein C."/>
            <person name="Boos W."/>
            <person name="Welte W."/>
        </authorList>
    </citation>
    <scope>X-RAY CRYSTALLOGRAPHY (1.90 ANGSTROMS)</scope>
    <scope>SUBUNIT</scope>
    <scope>DOMAIN</scope>
</reference>
<protein>
    <recommendedName>
        <fullName>Trehalose/maltose import ATP-binding protein MalK</fullName>
        <ecNumber>7.5.2.1</ecNumber>
    </recommendedName>
</protein>
<keyword id="KW-0002">3D-structure</keyword>
<keyword id="KW-0067">ATP-binding</keyword>
<keyword id="KW-1003">Cell membrane</keyword>
<keyword id="KW-0460">Magnesium</keyword>
<keyword id="KW-0472">Membrane</keyword>
<keyword id="KW-0479">Metal-binding</keyword>
<keyword id="KW-0547">Nucleotide-binding</keyword>
<keyword id="KW-0762">Sugar transport</keyword>
<keyword id="KW-1278">Translocase</keyword>
<keyword id="KW-0813">Transport</keyword>
<organism>
    <name type="scientific">Thermococcus litoralis (strain ATCC 51850 / DSM 5473 / JCM 8560 / NS-C)</name>
    <dbReference type="NCBI Taxonomy" id="523849"/>
    <lineage>
        <taxon>Archaea</taxon>
        <taxon>Methanobacteriati</taxon>
        <taxon>Methanobacteriota</taxon>
        <taxon>Thermococci</taxon>
        <taxon>Thermococcales</taxon>
        <taxon>Thermococcaceae</taxon>
        <taxon>Thermococcus</taxon>
    </lineage>
</organism>
<proteinExistence type="evidence at protein level"/>
<feature type="chain" id="PRO_0000421285" description="Trehalose/maltose import ATP-binding protein MalK">
    <location>
        <begin position="1"/>
        <end position="372"/>
    </location>
</feature>
<feature type="domain" description="ABC transporter" evidence="1">
    <location>
        <begin position="4"/>
        <end position="240"/>
    </location>
</feature>
<feature type="binding site" evidence="1">
    <location>
        <begin position="36"/>
        <end position="43"/>
    </location>
    <ligand>
        <name>ATP</name>
        <dbReference type="ChEBI" id="CHEBI:30616"/>
    </ligand>
</feature>
<feature type="sequence conflict" description="In Ref. 1; AAD24578 and 2; AAG45393." evidence="7" ref="1 2">
    <original>M</original>
    <variation>L</variation>
    <location>
        <position position="22"/>
    </location>
</feature>
<feature type="sequence conflict" description="In Ref. 1; AAD24578 and 2; AAG45393." evidence="7" ref="1 2">
    <original>K</original>
    <variation>R</variation>
    <location>
        <position position="65"/>
    </location>
</feature>
<feature type="sequence conflict" description="In Ref. 1; AAD24578 and 2; AAG45393." evidence="7" ref="1 2">
    <original>Q</original>
    <variation>R</variation>
    <location>
        <position position="301"/>
    </location>
</feature>
<feature type="sequence conflict" description="In Ref. 1; AAD24578 and 2; AAG45393." evidence="7" ref="1 2">
    <original>S</original>
    <variation>A</variation>
    <location>
        <position position="338"/>
    </location>
</feature>
<feature type="strand" evidence="8">
    <location>
        <begin position="2"/>
        <end position="13"/>
    </location>
</feature>
<feature type="strand" evidence="8">
    <location>
        <begin position="16"/>
        <end position="27"/>
    </location>
</feature>
<feature type="strand" evidence="8">
    <location>
        <begin position="31"/>
        <end position="35"/>
    </location>
</feature>
<feature type="helix" evidence="8">
    <location>
        <begin position="42"/>
        <end position="50"/>
    </location>
</feature>
<feature type="strand" evidence="8">
    <location>
        <begin position="56"/>
        <end position="62"/>
    </location>
</feature>
<feature type="strand" evidence="8">
    <location>
        <begin position="65"/>
        <end position="69"/>
    </location>
</feature>
<feature type="helix" evidence="8">
    <location>
        <begin position="70"/>
        <end position="72"/>
    </location>
</feature>
<feature type="helix" evidence="8">
    <location>
        <begin position="78"/>
        <end position="80"/>
    </location>
</feature>
<feature type="strand" evidence="8">
    <location>
        <begin position="81"/>
        <end position="86"/>
    </location>
</feature>
<feature type="helix" evidence="8">
    <location>
        <begin position="98"/>
        <end position="108"/>
    </location>
</feature>
<feature type="helix" evidence="8">
    <location>
        <begin position="113"/>
        <end position="126"/>
    </location>
</feature>
<feature type="helix" evidence="8">
    <location>
        <begin position="130"/>
        <end position="132"/>
    </location>
</feature>
<feature type="helix" evidence="8">
    <location>
        <begin position="137"/>
        <end position="139"/>
    </location>
</feature>
<feature type="helix" evidence="8">
    <location>
        <begin position="142"/>
        <end position="155"/>
    </location>
</feature>
<feature type="strand" evidence="8">
    <location>
        <begin position="159"/>
        <end position="164"/>
    </location>
</feature>
<feature type="turn" evidence="8">
    <location>
        <begin position="166"/>
        <end position="169"/>
    </location>
</feature>
<feature type="helix" evidence="8">
    <location>
        <begin position="172"/>
        <end position="189"/>
    </location>
</feature>
<feature type="strand" evidence="8">
    <location>
        <begin position="192"/>
        <end position="198"/>
    </location>
</feature>
<feature type="helix" evidence="8">
    <location>
        <begin position="200"/>
        <end position="206"/>
    </location>
</feature>
<feature type="strand" evidence="8">
    <location>
        <begin position="208"/>
        <end position="214"/>
    </location>
</feature>
<feature type="strand" evidence="8">
    <location>
        <begin position="217"/>
        <end position="222"/>
    </location>
</feature>
<feature type="helix" evidence="8">
    <location>
        <begin position="224"/>
        <end position="229"/>
    </location>
</feature>
<feature type="helix" evidence="8">
    <location>
        <begin position="234"/>
        <end position="239"/>
    </location>
</feature>
<feature type="strand" evidence="8">
    <location>
        <begin position="240"/>
        <end position="243"/>
    </location>
</feature>
<feature type="strand" evidence="8">
    <location>
        <begin position="246"/>
        <end position="252"/>
    </location>
</feature>
<feature type="strand" evidence="8">
    <location>
        <begin position="256"/>
        <end position="259"/>
    </location>
</feature>
<feature type="strand" evidence="8">
    <location>
        <begin position="264"/>
        <end position="266"/>
    </location>
</feature>
<feature type="helix" evidence="8">
    <location>
        <begin position="269"/>
        <end position="277"/>
    </location>
</feature>
<feature type="strand" evidence="8">
    <location>
        <begin position="283"/>
        <end position="289"/>
    </location>
</feature>
<feature type="helix" evidence="8">
    <location>
        <begin position="291"/>
        <end position="293"/>
    </location>
</feature>
<feature type="strand" evidence="8">
    <location>
        <begin position="294"/>
        <end position="296"/>
    </location>
</feature>
<feature type="turn" evidence="8">
    <location>
        <begin position="297"/>
        <end position="299"/>
    </location>
</feature>
<feature type="turn" evidence="8">
    <location>
        <begin position="305"/>
        <end position="307"/>
    </location>
</feature>
<feature type="strand" evidence="8">
    <location>
        <begin position="308"/>
        <end position="319"/>
    </location>
</feature>
<feature type="strand" evidence="8">
    <location>
        <begin position="324"/>
        <end position="330"/>
    </location>
</feature>
<feature type="strand" evidence="8">
    <location>
        <begin position="333"/>
        <end position="339"/>
    </location>
</feature>
<feature type="strand" evidence="8">
    <location>
        <begin position="350"/>
        <end position="355"/>
    </location>
</feature>
<feature type="helix" evidence="8">
    <location>
        <begin position="357"/>
        <end position="359"/>
    </location>
</feature>
<feature type="strand" evidence="8">
    <location>
        <begin position="361"/>
        <end position="364"/>
    </location>
</feature>
<feature type="turn" evidence="8">
    <location>
        <begin position="365"/>
        <end position="367"/>
    </location>
</feature>
<name>MALK_THELN</name>
<gene>
    <name type="primary">malK</name>
    <name type="ORF">OCC_13985</name>
</gene>